<comment type="function">
    <text evidence="2">Component of the cytochrome b6-f complex, which mediates electron transfer between photosystem II (PSII) and photosystem I (PSI), cyclic electron flow around PSI, and state transitions.</text>
</comment>
<comment type="subunit">
    <text evidence="1">The 4 large subunits of the cytochrome b6-f complex are cytochrome b6, subunit IV (17 kDa polypeptide, petD), cytochrome f and the Rieske protein, while the 4 small subunits are petG, petL, petM and petN. The complex functions as a dimer (By similarity).</text>
</comment>
<comment type="subcellular location">
    <subcellularLocation>
        <location evidence="2">Plastid</location>
        <location evidence="2">Chloroplast thylakoid membrane</location>
        <topology evidence="2">Multi-pass membrane protein</topology>
    </subcellularLocation>
</comment>
<comment type="similarity">
    <text evidence="2">Belongs to the cytochrome b family. PetD subfamily.</text>
</comment>
<accession>A1EA39</accession>
<keyword id="KW-0150">Chloroplast</keyword>
<keyword id="KW-0249">Electron transport</keyword>
<keyword id="KW-0472">Membrane</keyword>
<keyword id="KW-0602">Photosynthesis</keyword>
<keyword id="KW-0934">Plastid</keyword>
<keyword id="KW-0793">Thylakoid</keyword>
<keyword id="KW-0812">Transmembrane</keyword>
<keyword id="KW-1133">Transmembrane helix</keyword>
<keyword id="KW-0813">Transport</keyword>
<sequence length="160" mass="17489">MGVTKKPDLNDPVLRAKLAKGMGHNYYGEPAWPNDLLYIFPVVILGTIACNVGLAVLEPSMIGEPADPFATPLEILPEWYFFPVFQILRTVPNKLLGVLLMVSVPTGLLTVPFLENVNKFQNPFRRPVATTVFLIGTAVALWLGIGATLPIDKSLTLGLF</sequence>
<gene>
    <name evidence="2" type="primary">petD</name>
</gene>
<dbReference type="EMBL" id="EF115543">
    <property type="protein sequence ID" value="ABK79610.1"/>
    <property type="molecule type" value="Genomic_DNA"/>
</dbReference>
<dbReference type="RefSeq" id="YP_874767.1">
    <property type="nucleotide sequence ID" value="NC_008591.1"/>
</dbReference>
<dbReference type="SMR" id="A1EA39"/>
<dbReference type="GeneID" id="4525012"/>
<dbReference type="GO" id="GO:0009535">
    <property type="term" value="C:chloroplast thylakoid membrane"/>
    <property type="evidence" value="ECO:0007669"/>
    <property type="project" value="UniProtKB-SubCell"/>
</dbReference>
<dbReference type="GO" id="GO:0045158">
    <property type="term" value="F:electron transporter, transferring electrons within cytochrome b6/f complex of photosystem II activity"/>
    <property type="evidence" value="ECO:0007669"/>
    <property type="project" value="UniProtKB-UniRule"/>
</dbReference>
<dbReference type="GO" id="GO:0045156">
    <property type="term" value="F:electron transporter, transferring electrons within the cyclic electron transport pathway of photosynthesis activity"/>
    <property type="evidence" value="ECO:0007669"/>
    <property type="project" value="InterPro"/>
</dbReference>
<dbReference type="GO" id="GO:0016491">
    <property type="term" value="F:oxidoreductase activity"/>
    <property type="evidence" value="ECO:0007669"/>
    <property type="project" value="InterPro"/>
</dbReference>
<dbReference type="GO" id="GO:0009767">
    <property type="term" value="P:photosynthetic electron transport chain"/>
    <property type="evidence" value="ECO:0007669"/>
    <property type="project" value="InterPro"/>
</dbReference>
<dbReference type="CDD" id="cd00290">
    <property type="entry name" value="cytochrome_b_C"/>
    <property type="match status" value="1"/>
</dbReference>
<dbReference type="FunFam" id="1.10.287.980:FF:000001">
    <property type="entry name" value="Cytochrome b6-f complex subunit 4"/>
    <property type="match status" value="1"/>
</dbReference>
<dbReference type="FunFam" id="1.20.5.510:FF:000002">
    <property type="entry name" value="Cytochrome b6-f complex subunit 4"/>
    <property type="match status" value="1"/>
</dbReference>
<dbReference type="Gene3D" id="1.10.287.980">
    <property type="entry name" value="plastocyanin oxidoreductase"/>
    <property type="match status" value="1"/>
</dbReference>
<dbReference type="Gene3D" id="1.20.5.510">
    <property type="entry name" value="Single helix bin"/>
    <property type="match status" value="1"/>
</dbReference>
<dbReference type="HAMAP" id="MF_01344">
    <property type="entry name" value="Cytb6_f_subIV"/>
    <property type="match status" value="1"/>
</dbReference>
<dbReference type="InterPro" id="IPR005798">
    <property type="entry name" value="Cyt_b/b6_C"/>
</dbReference>
<dbReference type="InterPro" id="IPR036150">
    <property type="entry name" value="Cyt_b/b6_C_sf"/>
</dbReference>
<dbReference type="InterPro" id="IPR005870">
    <property type="entry name" value="Cyt_b6/f_cplx_suIV"/>
</dbReference>
<dbReference type="InterPro" id="IPR048260">
    <property type="entry name" value="Cytochrome_b_C_euk/bac"/>
</dbReference>
<dbReference type="NCBIfam" id="TIGR01156">
    <property type="entry name" value="cytb6_f_IV"/>
    <property type="match status" value="1"/>
</dbReference>
<dbReference type="PANTHER" id="PTHR19271">
    <property type="entry name" value="CYTOCHROME B"/>
    <property type="match status" value="1"/>
</dbReference>
<dbReference type="PANTHER" id="PTHR19271:SF40">
    <property type="entry name" value="CYTOCHROME B"/>
    <property type="match status" value="1"/>
</dbReference>
<dbReference type="Pfam" id="PF00032">
    <property type="entry name" value="Cytochrom_B_C"/>
    <property type="match status" value="1"/>
</dbReference>
<dbReference type="PIRSF" id="PIRSF000033">
    <property type="entry name" value="B6f_17K"/>
    <property type="match status" value="1"/>
</dbReference>
<dbReference type="SUPFAM" id="SSF81648">
    <property type="entry name" value="a domain/subunit of cytochrome bc1 complex (Ubiquinol-cytochrome c reductase)"/>
    <property type="match status" value="1"/>
</dbReference>
<dbReference type="PROSITE" id="PS51003">
    <property type="entry name" value="CYTB_CTER"/>
    <property type="match status" value="1"/>
</dbReference>
<evidence type="ECO:0000250" key="1"/>
<evidence type="ECO:0000255" key="2">
    <source>
        <dbReference type="HAMAP-Rule" id="MF_01344"/>
    </source>
</evidence>
<name>PETD_AGRST</name>
<proteinExistence type="inferred from homology"/>
<reference key="1">
    <citation type="journal article" date="2007" name="Theor. Appl. Genet.">
        <title>Complete chloroplast genome sequences of Hordeum vulgare, Sorghum bicolor and Agrostis stolonifera, and comparative analyses with other grass genomes.</title>
        <authorList>
            <person name="Saski C."/>
            <person name="Lee S.-B."/>
            <person name="Fjellheim S."/>
            <person name="Guda C."/>
            <person name="Jansen R.K."/>
            <person name="Luo H."/>
            <person name="Tomkins J."/>
            <person name="Rognli O.A."/>
            <person name="Daniell H."/>
            <person name="Clarke J.L."/>
        </authorList>
    </citation>
    <scope>NUCLEOTIDE SEQUENCE [LARGE SCALE GENOMIC DNA]</scope>
    <source>
        <strain>cv. Penn A-4</strain>
    </source>
</reference>
<feature type="chain" id="PRO_0000276533" description="Cytochrome b6-f complex subunit 4">
    <location>
        <begin position="1"/>
        <end position="160"/>
    </location>
</feature>
<feature type="transmembrane region" description="Helical" evidence="2">
    <location>
        <begin position="36"/>
        <end position="56"/>
    </location>
</feature>
<feature type="transmembrane region" description="Helical" evidence="2">
    <location>
        <begin position="95"/>
        <end position="115"/>
    </location>
</feature>
<feature type="transmembrane region" description="Helical" evidence="2">
    <location>
        <begin position="131"/>
        <end position="151"/>
    </location>
</feature>
<protein>
    <recommendedName>
        <fullName evidence="2">Cytochrome b6-f complex subunit 4</fullName>
    </recommendedName>
    <alternativeName>
        <fullName evidence="2">17 kDa polypeptide</fullName>
    </alternativeName>
</protein>
<organism>
    <name type="scientific">Agrostis stolonifera</name>
    <name type="common">Creeping bentgrass</name>
    <dbReference type="NCBI Taxonomy" id="63632"/>
    <lineage>
        <taxon>Eukaryota</taxon>
        <taxon>Viridiplantae</taxon>
        <taxon>Streptophyta</taxon>
        <taxon>Embryophyta</taxon>
        <taxon>Tracheophyta</taxon>
        <taxon>Spermatophyta</taxon>
        <taxon>Magnoliopsida</taxon>
        <taxon>Liliopsida</taxon>
        <taxon>Poales</taxon>
        <taxon>Poaceae</taxon>
        <taxon>BOP clade</taxon>
        <taxon>Pooideae</taxon>
        <taxon>Poodae</taxon>
        <taxon>Poeae</taxon>
        <taxon>Poeae Chloroplast Group 1 (Aveneae type)</taxon>
        <taxon>Agrostidodinae</taxon>
        <taxon>Agrostidinae</taxon>
        <taxon>Agrostis</taxon>
    </lineage>
</organism>
<geneLocation type="chloroplast"/>